<accession>P0A9J6</accession>
<accession>P05054</accession>
<accession>Q2M870</accession>
<reference key="1">
    <citation type="journal article" date="1986" name="J. Biol. Chem.">
        <title>Ribokinase from Escherichia coli K12. Nucleotide sequence and overexpression of the rbsK gene and purification of ribokinase.</title>
        <authorList>
            <person name="Hope J.N."/>
            <person name="Bell A.W."/>
            <person name="Hermodson M.A."/>
            <person name="Groarke J.M."/>
        </authorList>
    </citation>
    <scope>NUCLEOTIDE SEQUENCE [GENOMIC DNA]</scope>
    <scope>PROTEIN SEQUENCE OF 1-21 AND 297-309</scope>
    <scope>FUNCTION</scope>
    <scope>CATALYTIC ACTIVITY</scope>
    <source>
        <strain>K12</strain>
    </source>
</reference>
<reference key="2">
    <citation type="journal article" date="1993" name="Genomics">
        <title>DNA sequence and analysis of 136 kilobases of the Escherichia coli genome: organizational symmetry around the origin of replication.</title>
        <authorList>
            <person name="Burland V.D."/>
            <person name="Plunkett G. III"/>
            <person name="Daniels D.L."/>
            <person name="Blattner F.R."/>
        </authorList>
    </citation>
    <scope>NUCLEOTIDE SEQUENCE [LARGE SCALE GENOMIC DNA]</scope>
    <source>
        <strain>K12 / MG1655 / ATCC 47076</strain>
    </source>
</reference>
<reference key="3">
    <citation type="journal article" date="1997" name="Science">
        <title>The complete genome sequence of Escherichia coli K-12.</title>
        <authorList>
            <person name="Blattner F.R."/>
            <person name="Plunkett G. III"/>
            <person name="Bloch C.A."/>
            <person name="Perna N.T."/>
            <person name="Burland V."/>
            <person name="Riley M."/>
            <person name="Collado-Vides J."/>
            <person name="Glasner J.D."/>
            <person name="Rode C.K."/>
            <person name="Mayhew G.F."/>
            <person name="Gregor J."/>
            <person name="Davis N.W."/>
            <person name="Kirkpatrick H.A."/>
            <person name="Goeden M.A."/>
            <person name="Rose D.J."/>
            <person name="Mau B."/>
            <person name="Shao Y."/>
        </authorList>
    </citation>
    <scope>NUCLEOTIDE SEQUENCE [LARGE SCALE GENOMIC DNA]</scope>
    <source>
        <strain>K12 / MG1655 / ATCC 47076</strain>
    </source>
</reference>
<reference key="4">
    <citation type="journal article" date="2006" name="Mol. Syst. Biol.">
        <title>Highly accurate genome sequences of Escherichia coli K-12 strains MG1655 and W3110.</title>
        <authorList>
            <person name="Hayashi K."/>
            <person name="Morooka N."/>
            <person name="Yamamoto Y."/>
            <person name="Fujita K."/>
            <person name="Isono K."/>
            <person name="Choi S."/>
            <person name="Ohtsubo E."/>
            <person name="Baba T."/>
            <person name="Wanner B.L."/>
            <person name="Mori H."/>
            <person name="Horiuchi T."/>
        </authorList>
    </citation>
    <scope>NUCLEOTIDE SEQUENCE [LARGE SCALE GENOMIC DNA]</scope>
    <source>
        <strain>K12 / W3110 / ATCC 27325 / DSM 5911</strain>
    </source>
</reference>
<reference key="5">
    <citation type="journal article" date="1997" name="Protein Sci.">
        <title>Purification, characterization, and crystallization of Escherichia coli ribokinase.</title>
        <authorList>
            <person name="Sigrell J.A."/>
            <person name="Cameron A.D."/>
            <person name="Jones T.A."/>
            <person name="Mowbray S.L."/>
        </authorList>
    </citation>
    <scope>SUBUNIT</scope>
    <source>
        <strain>K12</strain>
    </source>
</reference>
<reference key="6">
    <citation type="journal article" date="2001" name="J. Protein Chem.">
        <title>The effect of inorganic phosphate on the activity of bacterial ribokinase.</title>
        <authorList>
            <person name="Maj M.C."/>
            <person name="Gupta R.S."/>
        </authorList>
    </citation>
    <scope>FUNCTION</scope>
    <scope>CATALYTIC ACTIVITY</scope>
    <scope>BIOPHYSICOCHEMICAL PROPERTIES</scope>
</reference>
<reference key="7">
    <citation type="journal article" date="2006" name="Bioorg. Med. Chem.">
        <title>Ribokinase from E. coli: expression, purification, and substrate specificity.</title>
        <authorList>
            <person name="Chuvikovsky D.V."/>
            <person name="Esipov R.S."/>
            <person name="Skoblov Y.S."/>
            <person name="Chupova L.A."/>
            <person name="Muravyova T.I."/>
            <person name="Miroshnikov A.I."/>
            <person name="Lapinjoki S."/>
            <person name="Mikhailopulo I.A."/>
        </authorList>
    </citation>
    <scope>FUNCTION</scope>
    <scope>CATALYTIC ACTIVITY</scope>
    <scope>BIOPHYSICOCHEMICAL PROPERTIES</scope>
    <scope>COFACTOR</scope>
    <scope>ACTIVITY REGULATION</scope>
</reference>
<reference key="8">
    <citation type="journal article" date="1998" name="Structure">
        <title>Structure of Escherichia coli ribokinase in complex with ribose and dinucleotide determined to 1.8-A resolution: insights into a new family of kinase structures.</title>
        <authorList>
            <person name="Sigrell J.A."/>
            <person name="Cameron A.D."/>
            <person name="Jones T.A."/>
            <person name="Mowbray S.L."/>
        </authorList>
    </citation>
    <scope>X-RAY CRYSTALLOGRAPHY (1.84 ANGSTROMS) IN COMPLEX WITH AMP-PNP AND RIBOSE</scope>
    <source>
        <strain>K12</strain>
    </source>
</reference>
<reference key="9">
    <citation type="journal article" date="1999" name="J. Mol. Biol.">
        <title>Induced fit on sugar binding activates ribokinase.</title>
        <authorList>
            <person name="Sigrell J.A."/>
            <person name="Cameron A.D."/>
            <person name="Mowbray S.L."/>
        </authorList>
    </citation>
    <scope>X-RAY CRYSTALLOGRAPHY (2.25 ANGSTROMS) IN COMPLEX WITH ADP; MAGNESIUM AND RIBOSE</scope>
</reference>
<reference key="10">
    <citation type="journal article" date="2002" name="J. Mol. Biol.">
        <title>Activation of ribokinase by monovalent cations.</title>
        <authorList>
            <person name="Andersson C.E."/>
            <person name="Mowbray S.L."/>
        </authorList>
    </citation>
    <scope>X-RAY CRYSTALLOGRAPHY (2.34 ANGSTROMS) IN COMPLEX WITH ATP ANALOG; CESIUM AND RIBOSE</scope>
    <scope>ACTIVITY REGULATION</scope>
</reference>
<organism>
    <name type="scientific">Escherichia coli (strain K12)</name>
    <dbReference type="NCBI Taxonomy" id="83333"/>
    <lineage>
        <taxon>Bacteria</taxon>
        <taxon>Pseudomonadati</taxon>
        <taxon>Pseudomonadota</taxon>
        <taxon>Gammaproteobacteria</taxon>
        <taxon>Enterobacterales</taxon>
        <taxon>Enterobacteriaceae</taxon>
        <taxon>Escherichia</taxon>
    </lineage>
</organism>
<keyword id="KW-0002">3D-structure</keyword>
<keyword id="KW-0067">ATP-binding</keyword>
<keyword id="KW-0119">Carbohydrate metabolism</keyword>
<keyword id="KW-0963">Cytoplasm</keyword>
<keyword id="KW-0903">Direct protein sequencing</keyword>
<keyword id="KW-0418">Kinase</keyword>
<keyword id="KW-0460">Magnesium</keyword>
<keyword id="KW-0479">Metal-binding</keyword>
<keyword id="KW-0547">Nucleotide-binding</keyword>
<keyword id="KW-0630">Potassium</keyword>
<keyword id="KW-1185">Reference proteome</keyword>
<keyword id="KW-0808">Transferase</keyword>
<gene>
    <name evidence="1 9" type="primary">rbsK</name>
    <name type="ordered locus">b3752</name>
    <name type="ordered locus">JW3731</name>
</gene>
<comment type="function">
    <text evidence="1 3 6">Catalyzes the phosphorylation of ribose at O-5 in a reaction requiring ATP and magnesium. The resulting D-ribose-5-phosphate can then be used either for sythesis of nucleotides, histidine, and tryptophan, or as a component of the pentose phosphate pathway.</text>
</comment>
<comment type="catalytic activity">
    <reaction evidence="1 3 5 6">
        <text>D-ribose + ATP = D-ribose 5-phosphate + ADP + H(+)</text>
        <dbReference type="Rhea" id="RHEA:13697"/>
        <dbReference type="ChEBI" id="CHEBI:15378"/>
        <dbReference type="ChEBI" id="CHEBI:30616"/>
        <dbReference type="ChEBI" id="CHEBI:47013"/>
        <dbReference type="ChEBI" id="CHEBI:78346"/>
        <dbReference type="ChEBI" id="CHEBI:456216"/>
        <dbReference type="EC" id="2.7.1.15"/>
    </reaction>
</comment>
<comment type="cofactor">
    <cofactor evidence="1 5 11">
        <name>Mg(2+)</name>
        <dbReference type="ChEBI" id="CHEBI:18420"/>
    </cofactor>
    <cofactor evidence="5">
        <name>Mn(2+)</name>
        <dbReference type="ChEBI" id="CHEBI:29035"/>
    </cofactor>
    <text evidence="1 5 11">Requires a divalent cation, most likely magnesium in vivo, as an electrophilic catalyst to aid phosphoryl group transfer. It is the chelate of the metal and the nucleotide that is the actual substrate (Probable). Also active with manganase (PubMed:16784868).</text>
</comment>
<comment type="activity regulation">
    <text evidence="1 4 5 11">Activated by a monovalent cation that binds near, but not in, the active site (PubMed:11786021). The most likely occupant of the site in vivo is potassium (PubMed:11786021, PubMed:16784868). Also activated by ammonium ion (PubMed:16784868). Ion binding induces a conformational change that may alter substrate affinity (Probable).</text>
</comment>
<comment type="biophysicochemical properties">
    <kinetics>
        <KM evidence="5">0.213 mM for ATP</KM>
        <KM evidence="5">0.279 mM for D-ribose</KM>
        <KM evidence="5">1.41 mM for 2-deoxy-D-ribose</KM>
        <KM evidence="5">32 mM for D-arabinose</KM>
        <KM evidence="5">31.6 mM for D-xylose</KM>
        <KM evidence="5">8.2 mM for D-fructose</KM>
        <KM evidence="3">0.65 mM for ribose (at pH 6.2 in the presence of 0 mM inorganic phosphate)</KM>
        <KM evidence="3">0.43 mM for ribose (at pH 6.2 in the presence of 0.5 mM inorganic phosphate)</KM>
        <KM evidence="3">0.27 mM for ribose (at pH 6.2 in the presence of 1 mM inorganic phosphate)</KM>
        <KM evidence="3">0.23 mM for ribose (at pH 6.2 in the presence of 5 mM inorganic phosphate)</KM>
        <KM evidence="3">0.21 mM for ribose (at pH 6.2 in the presence of 20 mM inorganic phosphate)</KM>
        <Vmax evidence="5">122.0 umol/min/mg enzyme toward ATP</Vmax>
        <Vmax evidence="5">81.0 umol/min/mg enzyme toward D-ribose</Vmax>
        <Vmax evidence="5">25.0 umol/min/mg enzyme toward 2-deoxy-D-ribose</Vmax>
        <Vmax evidence="5">0.6 umol/min/mg enzyme toward D-arabinose</Vmax>
        <Vmax evidence="5">0.86 umol/min/mg enzyme toward D-xylose</Vmax>
        <Vmax evidence="5">0.226 umol/min/mg enzyme toward D-fructose</Vmax>
        <Vmax evidence="3">7.6 pmol/min/mg enzyme (at pH 6.2 in the presence of 0 mM inorganic phosphate)</Vmax>
        <Vmax evidence="3">32.0 pmol/min/mg enzyme (at pH 6.2 in the presence of 0.5 mM inorganic phosphate)</Vmax>
        <Vmax evidence="3">59.6 pmol/min/mg enzyme (at pH 6.2 in the presence of 1 mM inorganic phosphate)</Vmax>
        <Vmax evidence="3">139.4 pmol/min/mg enzyme (at pH 6.2 in the presence of 5 mM inorganic phosphate)</Vmax>
        <Vmax evidence="3">172.4 pmol/min/mg enzyme (at pH 6.2 in the presence of 20 mM inorganic phosphate)</Vmax>
    </kinetics>
    <phDependence>
        <text evidence="5">Optimum pH is 8-9.</text>
    </phDependence>
    <temperatureDependence>
        <text evidence="5">Optimum temperature is 30-50 degrees Celsius.</text>
    </temperatureDependence>
</comment>
<comment type="pathway">
    <text evidence="1 12">Carbohydrate metabolism; D-ribose degradation; D-ribose 5-phosphate from beta-D-ribopyranose: step 2/2.</text>
</comment>
<comment type="subunit">
    <text evidence="1 7">Homodimer.</text>
</comment>
<comment type="subcellular location">
    <subcellularLocation>
        <location evidence="1 10">Cytoplasm</location>
    </subcellularLocation>
</comment>
<comment type="similarity">
    <text evidence="1">Belongs to the carbohydrate kinase PfkB family. Ribokinase subfamily.</text>
</comment>
<name>RBSK_ECOLI</name>
<dbReference type="EC" id="2.7.1.15" evidence="1 3 6"/>
<dbReference type="EMBL" id="M13169">
    <property type="protein sequence ID" value="AAA51476.1"/>
    <property type="molecule type" value="Genomic_DNA"/>
</dbReference>
<dbReference type="EMBL" id="L10328">
    <property type="protein sequence ID" value="AAA62105.1"/>
    <property type="molecule type" value="Genomic_DNA"/>
</dbReference>
<dbReference type="EMBL" id="U00096">
    <property type="protein sequence ID" value="AAC76775.1"/>
    <property type="molecule type" value="Genomic_DNA"/>
</dbReference>
<dbReference type="EMBL" id="AP009048">
    <property type="protein sequence ID" value="BAE77536.1"/>
    <property type="molecule type" value="Genomic_DNA"/>
</dbReference>
<dbReference type="PIR" id="A26305">
    <property type="entry name" value="KIECRB"/>
</dbReference>
<dbReference type="RefSeq" id="NP_418208.1">
    <property type="nucleotide sequence ID" value="NC_000913.3"/>
</dbReference>
<dbReference type="RefSeq" id="WP_001300603.1">
    <property type="nucleotide sequence ID" value="NZ_STEB01000015.1"/>
</dbReference>
<dbReference type="PDB" id="1GQT">
    <property type="method" value="X-ray"/>
    <property type="resolution" value="2.34 A"/>
    <property type="chains" value="A/B/C/D=1-309"/>
</dbReference>
<dbReference type="PDB" id="1RK2">
    <property type="method" value="X-ray"/>
    <property type="resolution" value="2.25 A"/>
    <property type="chains" value="A/B/C/D=1-309"/>
</dbReference>
<dbReference type="PDB" id="1RKA">
    <property type="method" value="X-ray"/>
    <property type="resolution" value="2.30 A"/>
    <property type="chains" value="A=1-309"/>
</dbReference>
<dbReference type="PDB" id="1RKD">
    <property type="method" value="X-ray"/>
    <property type="resolution" value="1.84 A"/>
    <property type="chains" value="A=1-309"/>
</dbReference>
<dbReference type="PDB" id="1RKS">
    <property type="method" value="X-ray"/>
    <property type="resolution" value="2.40 A"/>
    <property type="chains" value="A=1-309"/>
</dbReference>
<dbReference type="PDBsum" id="1GQT"/>
<dbReference type="PDBsum" id="1RK2"/>
<dbReference type="PDBsum" id="1RKA"/>
<dbReference type="PDBsum" id="1RKD"/>
<dbReference type="PDBsum" id="1RKS"/>
<dbReference type="SMR" id="P0A9J6"/>
<dbReference type="BioGRID" id="4259582">
    <property type="interactions" value="13"/>
</dbReference>
<dbReference type="DIP" id="DIP-36178N"/>
<dbReference type="FunCoup" id="P0A9J6">
    <property type="interactions" value="729"/>
</dbReference>
<dbReference type="IntAct" id="P0A9J6">
    <property type="interactions" value="3"/>
</dbReference>
<dbReference type="STRING" id="511145.b3752"/>
<dbReference type="BindingDB" id="P0A9J6"/>
<dbReference type="ChEMBL" id="CHEMBL5093"/>
<dbReference type="DrugBank" id="DB03909">
    <property type="generic name" value="Adenosine-5'-[Beta, Gamma-Methylene]Triphosphate"/>
</dbReference>
<dbReference type="DrugBank" id="DB01936">
    <property type="generic name" value="alpha-D-arabinofuranose"/>
</dbReference>
<dbReference type="DrugBank" id="DB04444">
    <property type="generic name" value="Tetrafluoroaluminate Ion"/>
</dbReference>
<dbReference type="jPOST" id="P0A9J6"/>
<dbReference type="PaxDb" id="511145-b3752"/>
<dbReference type="DNASU" id="948260"/>
<dbReference type="EnsemblBacteria" id="AAC76775">
    <property type="protein sequence ID" value="AAC76775"/>
    <property type="gene ID" value="b3752"/>
</dbReference>
<dbReference type="GeneID" id="93778197"/>
<dbReference type="GeneID" id="948260"/>
<dbReference type="KEGG" id="ecj:JW3731"/>
<dbReference type="KEGG" id="eco:b3752"/>
<dbReference type="KEGG" id="ecoc:C3026_20325"/>
<dbReference type="PATRIC" id="fig|1411691.4.peg.2948"/>
<dbReference type="EchoBASE" id="EB0811"/>
<dbReference type="eggNOG" id="COG0524">
    <property type="taxonomic scope" value="Bacteria"/>
</dbReference>
<dbReference type="HOGENOM" id="CLU_027634_2_0_6"/>
<dbReference type="InParanoid" id="P0A9J6"/>
<dbReference type="OMA" id="DIVLIQQ"/>
<dbReference type="OrthoDB" id="9775849at2"/>
<dbReference type="PhylomeDB" id="P0A9J6"/>
<dbReference type="BioCyc" id="EcoCyc:RIBOKIN-MONOMER"/>
<dbReference type="BioCyc" id="MetaCyc:RIBOKIN-MONOMER"/>
<dbReference type="BRENDA" id="2.7.1.15">
    <property type="organism ID" value="2026"/>
</dbReference>
<dbReference type="UniPathway" id="UPA00916">
    <property type="reaction ID" value="UER00889"/>
</dbReference>
<dbReference type="EvolutionaryTrace" id="P0A9J6"/>
<dbReference type="PRO" id="PR:P0A9J6"/>
<dbReference type="Proteomes" id="UP000000625">
    <property type="component" value="Chromosome"/>
</dbReference>
<dbReference type="GO" id="GO:0005829">
    <property type="term" value="C:cytosol"/>
    <property type="evidence" value="ECO:0000314"/>
    <property type="project" value="EcoCyc"/>
</dbReference>
<dbReference type="GO" id="GO:0005524">
    <property type="term" value="F:ATP binding"/>
    <property type="evidence" value="ECO:0007669"/>
    <property type="project" value="UniProtKB-UniRule"/>
</dbReference>
<dbReference type="GO" id="GO:0046872">
    <property type="term" value="F:metal ion binding"/>
    <property type="evidence" value="ECO:0000314"/>
    <property type="project" value="EcoCyc"/>
</dbReference>
<dbReference type="GO" id="GO:0042803">
    <property type="term" value="F:protein homodimerization activity"/>
    <property type="evidence" value="ECO:0000314"/>
    <property type="project" value="EcoCyc"/>
</dbReference>
<dbReference type="GO" id="GO:0004747">
    <property type="term" value="F:ribokinase activity"/>
    <property type="evidence" value="ECO:0000314"/>
    <property type="project" value="EcoCyc"/>
</dbReference>
<dbReference type="GO" id="GO:0019303">
    <property type="term" value="P:D-ribose catabolic process"/>
    <property type="evidence" value="ECO:0000315"/>
    <property type="project" value="EcoCyc"/>
</dbReference>
<dbReference type="CDD" id="cd01174">
    <property type="entry name" value="ribokinase"/>
    <property type="match status" value="1"/>
</dbReference>
<dbReference type="FunFam" id="3.40.1190.20:FF:000012">
    <property type="entry name" value="Ribokinase"/>
    <property type="match status" value="1"/>
</dbReference>
<dbReference type="Gene3D" id="3.40.1190.20">
    <property type="match status" value="1"/>
</dbReference>
<dbReference type="HAMAP" id="MF_01987">
    <property type="entry name" value="Ribokinase"/>
    <property type="match status" value="1"/>
</dbReference>
<dbReference type="InterPro" id="IPR002173">
    <property type="entry name" value="Carboh/pur_kinase_PfkB_CS"/>
</dbReference>
<dbReference type="InterPro" id="IPR011611">
    <property type="entry name" value="PfkB_dom"/>
</dbReference>
<dbReference type="InterPro" id="IPR002139">
    <property type="entry name" value="Ribo/fructo_kinase"/>
</dbReference>
<dbReference type="InterPro" id="IPR011877">
    <property type="entry name" value="Ribokinase"/>
</dbReference>
<dbReference type="InterPro" id="IPR029056">
    <property type="entry name" value="Ribokinase-like"/>
</dbReference>
<dbReference type="NCBIfam" id="TIGR02152">
    <property type="entry name" value="D_ribokin_bact"/>
    <property type="match status" value="1"/>
</dbReference>
<dbReference type="NCBIfam" id="NF008353">
    <property type="entry name" value="PRK11142.1"/>
    <property type="match status" value="1"/>
</dbReference>
<dbReference type="PANTHER" id="PTHR10584:SF166">
    <property type="entry name" value="RIBOKINASE"/>
    <property type="match status" value="1"/>
</dbReference>
<dbReference type="PANTHER" id="PTHR10584">
    <property type="entry name" value="SUGAR KINASE"/>
    <property type="match status" value="1"/>
</dbReference>
<dbReference type="Pfam" id="PF00294">
    <property type="entry name" value="PfkB"/>
    <property type="match status" value="1"/>
</dbReference>
<dbReference type="PRINTS" id="PR00990">
    <property type="entry name" value="RIBOKINASE"/>
</dbReference>
<dbReference type="SUPFAM" id="SSF53613">
    <property type="entry name" value="Ribokinase-like"/>
    <property type="match status" value="1"/>
</dbReference>
<dbReference type="PROSITE" id="PS00584">
    <property type="entry name" value="PFKB_KINASES_2"/>
    <property type="match status" value="1"/>
</dbReference>
<evidence type="ECO:0000255" key="1">
    <source>
        <dbReference type="HAMAP-Rule" id="MF_01987"/>
    </source>
</evidence>
<evidence type="ECO:0000269" key="2">
    <source>
    </source>
</evidence>
<evidence type="ECO:0000269" key="3">
    <source>
    </source>
</evidence>
<evidence type="ECO:0000269" key="4">
    <source>
    </source>
</evidence>
<evidence type="ECO:0000269" key="5">
    <source>
    </source>
</evidence>
<evidence type="ECO:0000269" key="6">
    <source>
    </source>
</evidence>
<evidence type="ECO:0000269" key="7">
    <source>
    </source>
</evidence>
<evidence type="ECO:0000269" key="8">
    <source>
    </source>
</evidence>
<evidence type="ECO:0000303" key="9">
    <source>
    </source>
</evidence>
<evidence type="ECO:0000305" key="10"/>
<evidence type="ECO:0000305" key="11">
    <source>
    </source>
</evidence>
<evidence type="ECO:0000305" key="12">
    <source>
    </source>
</evidence>
<evidence type="ECO:0007829" key="13">
    <source>
        <dbReference type="PDB" id="1RK2"/>
    </source>
</evidence>
<evidence type="ECO:0007829" key="14">
    <source>
        <dbReference type="PDB" id="1RKD"/>
    </source>
</evidence>
<proteinExistence type="evidence at protein level"/>
<feature type="chain" id="PRO_0000080097" description="Ribokinase">
    <location>
        <begin position="1"/>
        <end position="309"/>
    </location>
</feature>
<feature type="active site" description="Proton acceptor" evidence="1 11">
    <location>
        <position position="255"/>
    </location>
</feature>
<feature type="binding site" evidence="1 2 4 8">
    <location>
        <begin position="14"/>
        <end position="16"/>
    </location>
    <ligand>
        <name>substrate</name>
    </ligand>
</feature>
<feature type="binding site" evidence="1 2 4 8">
    <location>
        <begin position="42"/>
        <end position="46"/>
    </location>
    <ligand>
        <name>substrate</name>
    </ligand>
</feature>
<feature type="binding site" evidence="1 2 4 8">
    <location>
        <position position="143"/>
    </location>
    <ligand>
        <name>substrate</name>
    </ligand>
</feature>
<feature type="binding site" evidence="1 2 4 8">
    <location>
        <position position="187"/>
    </location>
    <ligand>
        <name>ATP</name>
        <dbReference type="ChEBI" id="CHEBI:30616"/>
    </ligand>
</feature>
<feature type="binding site" evidence="1 2 4 8">
    <location>
        <begin position="223"/>
        <end position="228"/>
    </location>
    <ligand>
        <name>ATP</name>
        <dbReference type="ChEBI" id="CHEBI:30616"/>
    </ligand>
</feature>
<feature type="binding site" evidence="1 11">
    <location>
        <position position="249"/>
    </location>
    <ligand>
        <name>K(+)</name>
        <dbReference type="ChEBI" id="CHEBI:29103"/>
    </ligand>
</feature>
<feature type="binding site" evidence="1 11">
    <location>
        <position position="251"/>
    </location>
    <ligand>
        <name>K(+)</name>
        <dbReference type="ChEBI" id="CHEBI:29103"/>
    </ligand>
</feature>
<feature type="binding site" evidence="1 2 4">
    <location>
        <begin position="254"/>
        <end position="255"/>
    </location>
    <ligand>
        <name>ATP</name>
        <dbReference type="ChEBI" id="CHEBI:30616"/>
    </ligand>
</feature>
<feature type="binding site" evidence="1 2 4 8">
    <location>
        <position position="255"/>
    </location>
    <ligand>
        <name>substrate</name>
    </ligand>
</feature>
<feature type="binding site" evidence="1 2 4 8">
    <location>
        <position position="279"/>
    </location>
    <ligand>
        <name>ATP</name>
        <dbReference type="ChEBI" id="CHEBI:30616"/>
    </ligand>
</feature>
<feature type="binding site" evidence="1 11">
    <location>
        <position position="285"/>
    </location>
    <ligand>
        <name>K(+)</name>
        <dbReference type="ChEBI" id="CHEBI:29103"/>
    </ligand>
</feature>
<feature type="binding site" evidence="1 11">
    <location>
        <position position="288"/>
    </location>
    <ligand>
        <name>K(+)</name>
        <dbReference type="ChEBI" id="CHEBI:29103"/>
    </ligand>
</feature>
<feature type="binding site" evidence="1 11">
    <location>
        <position position="290"/>
    </location>
    <ligand>
        <name>K(+)</name>
        <dbReference type="ChEBI" id="CHEBI:29103"/>
    </ligand>
</feature>
<feature type="binding site" evidence="1 11">
    <location>
        <position position="294"/>
    </location>
    <ligand>
        <name>K(+)</name>
        <dbReference type="ChEBI" id="CHEBI:29103"/>
    </ligand>
</feature>
<feature type="strand" evidence="14">
    <location>
        <begin position="6"/>
        <end position="10"/>
    </location>
</feature>
<feature type="strand" evidence="14">
    <location>
        <begin position="14"/>
        <end position="20"/>
    </location>
</feature>
<feature type="strand" evidence="13">
    <location>
        <begin position="30"/>
        <end position="32"/>
    </location>
</feature>
<feature type="strand" evidence="14">
    <location>
        <begin position="36"/>
        <end position="41"/>
    </location>
</feature>
<feature type="helix" evidence="14">
    <location>
        <begin position="43"/>
        <end position="54"/>
    </location>
</feature>
<feature type="strand" evidence="14">
    <location>
        <begin position="57"/>
        <end position="67"/>
    </location>
</feature>
<feature type="helix" evidence="14">
    <location>
        <begin position="70"/>
        <end position="78"/>
    </location>
</feature>
<feature type="turn" evidence="14">
    <location>
        <begin position="79"/>
        <end position="81"/>
    </location>
</feature>
<feature type="strand" evidence="14">
    <location>
        <begin position="87"/>
        <end position="90"/>
    </location>
</feature>
<feature type="strand" evidence="14">
    <location>
        <begin position="96"/>
        <end position="102"/>
    </location>
</feature>
<feature type="strand" evidence="14">
    <location>
        <begin position="108"/>
        <end position="113"/>
    </location>
</feature>
<feature type="helix" evidence="14">
    <location>
        <begin position="115"/>
        <end position="119"/>
    </location>
</feature>
<feature type="helix" evidence="14">
    <location>
        <begin position="122"/>
        <end position="126"/>
    </location>
</feature>
<feature type="helix" evidence="14">
    <location>
        <begin position="129"/>
        <end position="134"/>
    </location>
</feature>
<feature type="strand" evidence="14">
    <location>
        <begin position="136"/>
        <end position="140"/>
    </location>
</feature>
<feature type="strand" evidence="14">
    <location>
        <begin position="142"/>
        <end position="144"/>
    </location>
</feature>
<feature type="helix" evidence="14">
    <location>
        <begin position="146"/>
        <end position="158"/>
    </location>
</feature>
<feature type="strand" evidence="14">
    <location>
        <begin position="162"/>
        <end position="165"/>
    </location>
</feature>
<feature type="helix" evidence="14">
    <location>
        <begin position="175"/>
        <end position="178"/>
    </location>
</feature>
<feature type="strand" evidence="14">
    <location>
        <begin position="182"/>
        <end position="184"/>
    </location>
</feature>
<feature type="helix" evidence="14">
    <location>
        <begin position="188"/>
        <end position="195"/>
    </location>
</feature>
<feature type="helix" evidence="14">
    <location>
        <begin position="202"/>
        <end position="214"/>
    </location>
</feature>
<feature type="strand" evidence="14">
    <location>
        <begin position="218"/>
        <end position="223"/>
    </location>
</feature>
<feature type="helix" evidence="14">
    <location>
        <begin position="225"/>
        <end position="227"/>
    </location>
</feature>
<feature type="strand" evidence="14">
    <location>
        <begin position="229"/>
        <end position="233"/>
    </location>
</feature>
<feature type="strand" evidence="14">
    <location>
        <begin position="236"/>
        <end position="240"/>
    </location>
</feature>
<feature type="helix" evidence="14">
    <location>
        <begin position="253"/>
        <end position="266"/>
    </location>
</feature>
<feature type="helix" evidence="14">
    <location>
        <begin position="271"/>
        <end position="286"/>
    </location>
</feature>
<feature type="strand" evidence="14">
    <location>
        <begin position="288"/>
        <end position="291"/>
    </location>
</feature>
<feature type="helix" evidence="14">
    <location>
        <begin position="292"/>
        <end position="294"/>
    </location>
</feature>
<feature type="helix" evidence="14">
    <location>
        <begin position="298"/>
        <end position="306"/>
    </location>
</feature>
<protein>
    <recommendedName>
        <fullName evidence="1 9">Ribokinase</fullName>
        <shortName evidence="1">RK</shortName>
        <ecNumber evidence="1 3 6">2.7.1.15</ecNumber>
    </recommendedName>
</protein>
<sequence>MQNAGSLVVLGSINADHILNLQSFPTPGETVTGNHYQVAFGGKGANQAVAAGRSGANIAFIACTGDDSIGESVRQQLATDNIDITPVSVIKGESTGVALIFVNGEGENVIGIHAGANAALSPALVEAQRERIANASALLMQLESPLESVMAAAKIAHQNKTIVALNPAPARELPDELLALVDIITPNETEAEKLTGIRVENDEDAAKAAQVLHEKGIRTVLITLGSRGVWASVNGEGQRVPGFRVQAVDTIAAGDTFNGALITALLEEKPLPEAIRFAHAAAAIAVTRKGAQPSVPWREEIDAFLDRQR</sequence>